<protein>
    <recommendedName>
        <fullName evidence="1">Cell division protein ZapB</fullName>
    </recommendedName>
</protein>
<dbReference type="EMBL" id="CP001127">
    <property type="protein sequence ID" value="ACF90307.1"/>
    <property type="molecule type" value="Genomic_DNA"/>
</dbReference>
<dbReference type="RefSeq" id="WP_000051370.1">
    <property type="nucleotide sequence ID" value="NC_011094.1"/>
</dbReference>
<dbReference type="SMR" id="B4TPU9"/>
<dbReference type="KEGG" id="sew:SeSA_A4304"/>
<dbReference type="HOGENOM" id="CLU_171174_2_0_6"/>
<dbReference type="Proteomes" id="UP000001865">
    <property type="component" value="Chromosome"/>
</dbReference>
<dbReference type="GO" id="GO:0005737">
    <property type="term" value="C:cytoplasm"/>
    <property type="evidence" value="ECO:0007669"/>
    <property type="project" value="UniProtKB-SubCell"/>
</dbReference>
<dbReference type="GO" id="GO:0000917">
    <property type="term" value="P:division septum assembly"/>
    <property type="evidence" value="ECO:0007669"/>
    <property type="project" value="UniProtKB-KW"/>
</dbReference>
<dbReference type="GO" id="GO:0043093">
    <property type="term" value="P:FtsZ-dependent cytokinesis"/>
    <property type="evidence" value="ECO:0007669"/>
    <property type="project" value="UniProtKB-UniRule"/>
</dbReference>
<dbReference type="FunFam" id="1.20.5.340:FF:000014">
    <property type="entry name" value="Cell division protein ZapB"/>
    <property type="match status" value="1"/>
</dbReference>
<dbReference type="Gene3D" id="1.20.5.340">
    <property type="match status" value="1"/>
</dbReference>
<dbReference type="HAMAP" id="MF_01196">
    <property type="entry name" value="ZapB"/>
    <property type="match status" value="1"/>
</dbReference>
<dbReference type="InterPro" id="IPR009252">
    <property type="entry name" value="Cell_div_ZapB"/>
</dbReference>
<dbReference type="NCBIfam" id="NF011951">
    <property type="entry name" value="PRK15422.1"/>
    <property type="match status" value="1"/>
</dbReference>
<dbReference type="Pfam" id="PF06005">
    <property type="entry name" value="ZapB"/>
    <property type="match status" value="1"/>
</dbReference>
<evidence type="ECO:0000255" key="1">
    <source>
        <dbReference type="HAMAP-Rule" id="MF_01196"/>
    </source>
</evidence>
<evidence type="ECO:0000256" key="2">
    <source>
        <dbReference type="SAM" id="MobiDB-lite"/>
    </source>
</evidence>
<comment type="function">
    <text evidence="1">Non-essential, abundant cell division factor that is required for proper Z-ring formation. It is recruited early to the divisome by direct interaction with FtsZ, stimulating Z-ring assembly and thereby promoting cell division earlier in the cell cycle. Its recruitment to the Z-ring requires functional FtsA or ZipA.</text>
</comment>
<comment type="subunit">
    <text evidence="1">Homodimer. The ends of the coiled-coil dimer bind to each other, forming polymers. Interacts with FtsZ.</text>
</comment>
<comment type="subcellular location">
    <subcellularLocation>
        <location evidence="1">Cytoplasm</location>
    </subcellularLocation>
    <text evidence="1">Localizes to the septum at mid-cell, in a FtsZ-like pattern.</text>
</comment>
<comment type="similarity">
    <text evidence="1">Belongs to the ZapB family.</text>
</comment>
<name>ZAPB_SALSV</name>
<reference key="1">
    <citation type="journal article" date="2011" name="J. Bacteriol.">
        <title>Comparative genomics of 28 Salmonella enterica isolates: evidence for CRISPR-mediated adaptive sublineage evolution.</title>
        <authorList>
            <person name="Fricke W.F."/>
            <person name="Mammel M.K."/>
            <person name="McDermott P.F."/>
            <person name="Tartera C."/>
            <person name="White D.G."/>
            <person name="Leclerc J.E."/>
            <person name="Ravel J."/>
            <person name="Cebula T.A."/>
        </authorList>
    </citation>
    <scope>NUCLEOTIDE SEQUENCE [LARGE SCALE GENOMIC DNA]</scope>
    <source>
        <strain>CVM19633</strain>
    </source>
</reference>
<sequence>MSLEVFEKLEAKVQQAIDTITLLQMEIEELKEKNNSLTQEVQSAQHQREELERENNSLKEQQSGWQERLQALLGRMEEV</sequence>
<feature type="chain" id="PRO_1000138450" description="Cell division protein ZapB">
    <location>
        <begin position="1"/>
        <end position="79"/>
    </location>
</feature>
<feature type="region of interest" description="Disordered" evidence="2">
    <location>
        <begin position="36"/>
        <end position="63"/>
    </location>
</feature>
<feature type="coiled-coil region" evidence="1">
    <location>
        <begin position="3"/>
        <end position="79"/>
    </location>
</feature>
<feature type="compositionally biased region" description="Polar residues" evidence="2">
    <location>
        <begin position="36"/>
        <end position="45"/>
    </location>
</feature>
<feature type="compositionally biased region" description="Basic and acidic residues" evidence="2">
    <location>
        <begin position="46"/>
        <end position="57"/>
    </location>
</feature>
<accession>B4TPU9</accession>
<keyword id="KW-0131">Cell cycle</keyword>
<keyword id="KW-0132">Cell division</keyword>
<keyword id="KW-0175">Coiled coil</keyword>
<keyword id="KW-0963">Cytoplasm</keyword>
<keyword id="KW-0717">Septation</keyword>
<gene>
    <name evidence="1" type="primary">zapB</name>
    <name type="ordered locus">SeSA_A4304</name>
</gene>
<organism>
    <name type="scientific">Salmonella schwarzengrund (strain CVM19633)</name>
    <dbReference type="NCBI Taxonomy" id="439843"/>
    <lineage>
        <taxon>Bacteria</taxon>
        <taxon>Pseudomonadati</taxon>
        <taxon>Pseudomonadota</taxon>
        <taxon>Gammaproteobacteria</taxon>
        <taxon>Enterobacterales</taxon>
        <taxon>Enterobacteriaceae</taxon>
        <taxon>Salmonella</taxon>
    </lineage>
</organism>
<proteinExistence type="inferred from homology"/>